<reference key="1">
    <citation type="journal article" date="1999" name="Plant Cell">
        <title>Regional expression of the rice KN1-type homeobox gene family during embryo, shoot, and flower development.</title>
        <authorList>
            <person name="Sentoku N."/>
            <person name="Sato Y."/>
            <person name="Kurata N."/>
            <person name="Ito Y."/>
            <person name="Kitano H."/>
            <person name="Matsuoka M."/>
        </authorList>
    </citation>
    <scope>NUCLEOTIDE SEQUENCE [MRNA]</scope>
    <scope>FUNCTION</scope>
    <scope>DEVELOPMENTAL STAGE</scope>
    <source>
        <strain>cv. Nipponbare</strain>
        <tissue>Embryo</tissue>
    </source>
</reference>
<reference key="2">
    <citation type="journal article" date="2002" name="Nature">
        <title>The genome sequence and structure of rice chromosome 1.</title>
        <authorList>
            <person name="Sasaki T."/>
            <person name="Matsumoto T."/>
            <person name="Yamamoto K."/>
            <person name="Sakata K."/>
            <person name="Baba T."/>
            <person name="Katayose Y."/>
            <person name="Wu J."/>
            <person name="Niimura Y."/>
            <person name="Cheng Z."/>
            <person name="Nagamura Y."/>
            <person name="Antonio B.A."/>
            <person name="Kanamori H."/>
            <person name="Hosokawa S."/>
            <person name="Masukawa M."/>
            <person name="Arikawa K."/>
            <person name="Chiden Y."/>
            <person name="Hayashi M."/>
            <person name="Okamoto M."/>
            <person name="Ando T."/>
            <person name="Aoki H."/>
            <person name="Arita K."/>
            <person name="Hamada M."/>
            <person name="Harada C."/>
            <person name="Hijishita S."/>
            <person name="Honda M."/>
            <person name="Ichikawa Y."/>
            <person name="Idonuma A."/>
            <person name="Iijima M."/>
            <person name="Ikeda M."/>
            <person name="Ikeno M."/>
            <person name="Ito S."/>
            <person name="Ito T."/>
            <person name="Ito Y."/>
            <person name="Ito Y."/>
            <person name="Iwabuchi A."/>
            <person name="Kamiya K."/>
            <person name="Karasawa W."/>
            <person name="Katagiri S."/>
            <person name="Kikuta A."/>
            <person name="Kobayashi N."/>
            <person name="Kono I."/>
            <person name="Machita K."/>
            <person name="Maehara T."/>
            <person name="Mizuno H."/>
            <person name="Mizubayashi T."/>
            <person name="Mukai Y."/>
            <person name="Nagasaki H."/>
            <person name="Nakashima M."/>
            <person name="Nakama Y."/>
            <person name="Nakamichi Y."/>
            <person name="Nakamura M."/>
            <person name="Namiki N."/>
            <person name="Negishi M."/>
            <person name="Ohta I."/>
            <person name="Ono N."/>
            <person name="Saji S."/>
            <person name="Sakai K."/>
            <person name="Shibata M."/>
            <person name="Shimokawa T."/>
            <person name="Shomura A."/>
            <person name="Song J."/>
            <person name="Takazaki Y."/>
            <person name="Terasawa K."/>
            <person name="Tsuji K."/>
            <person name="Waki K."/>
            <person name="Yamagata H."/>
            <person name="Yamane H."/>
            <person name="Yoshiki S."/>
            <person name="Yoshihara R."/>
            <person name="Yukawa K."/>
            <person name="Zhong H."/>
            <person name="Iwama H."/>
            <person name="Endo T."/>
            <person name="Ito H."/>
            <person name="Hahn J.H."/>
            <person name="Kim H.-I."/>
            <person name="Eun M.-Y."/>
            <person name="Yano M."/>
            <person name="Jiang J."/>
            <person name="Gojobori T."/>
        </authorList>
    </citation>
    <scope>NUCLEOTIDE SEQUENCE [LARGE SCALE GENOMIC DNA]</scope>
    <source>
        <strain>cv. Nipponbare</strain>
    </source>
</reference>
<reference key="3">
    <citation type="journal article" date="2005" name="Nature">
        <title>The map-based sequence of the rice genome.</title>
        <authorList>
            <consortium name="International rice genome sequencing project (IRGSP)"/>
        </authorList>
    </citation>
    <scope>NUCLEOTIDE SEQUENCE [LARGE SCALE GENOMIC DNA]</scope>
    <source>
        <strain>cv. Nipponbare</strain>
    </source>
</reference>
<reference key="4">
    <citation type="journal article" date="2008" name="Nucleic Acids Res.">
        <title>The rice annotation project database (RAP-DB): 2008 update.</title>
        <authorList>
            <consortium name="The rice annotation project (RAP)"/>
        </authorList>
    </citation>
    <scope>GENOME REANNOTATION</scope>
    <source>
        <strain>cv. Nipponbare</strain>
    </source>
</reference>
<reference key="5">
    <citation type="journal article" date="2013" name="Rice">
        <title>Improvement of the Oryza sativa Nipponbare reference genome using next generation sequence and optical map data.</title>
        <authorList>
            <person name="Kawahara Y."/>
            <person name="de la Bastide M."/>
            <person name="Hamilton J.P."/>
            <person name="Kanamori H."/>
            <person name="McCombie W.R."/>
            <person name="Ouyang S."/>
            <person name="Schwartz D.C."/>
            <person name="Tanaka T."/>
            <person name="Wu J."/>
            <person name="Zhou S."/>
            <person name="Childs K.L."/>
            <person name="Davidson R.M."/>
            <person name="Lin H."/>
            <person name="Quesada-Ocampo L."/>
            <person name="Vaillancourt B."/>
            <person name="Sakai H."/>
            <person name="Lee S.S."/>
            <person name="Kim J."/>
            <person name="Numa H."/>
            <person name="Itoh T."/>
            <person name="Buell C.R."/>
            <person name="Matsumoto T."/>
        </authorList>
    </citation>
    <scope>GENOME REANNOTATION</scope>
    <source>
        <strain>cv. Nipponbare</strain>
    </source>
</reference>
<reference key="6">
    <citation type="submission" date="1997-09" db="EMBL/GenBank/DDBJ databases">
        <title>cDNA for rice homeobox gene HOS16.</title>
        <authorList>
            <person name="Ito Y."/>
            <person name="Kurata N."/>
        </authorList>
    </citation>
    <scope>NUCLEOTIDE SEQUENCE [MRNA] OF 164-301</scope>
    <source>
        <strain>cv. Nipponbare</strain>
        <tissue>Embryo</tissue>
    </source>
</reference>
<reference key="7">
    <citation type="journal article" date="2008" name="FEBS J.">
        <title>Genome-wide identification, classification, evolutionary expansion and expression analyses of homeobox genes in rice.</title>
        <authorList>
            <person name="Jain M."/>
            <person name="Tyagi A.K."/>
            <person name="Khurana J.P."/>
        </authorList>
    </citation>
    <scope>GENE FAMILY</scope>
    <scope>NOMENCLATURE</scope>
</reference>
<organism>
    <name type="scientific">Oryza sativa subsp. japonica</name>
    <name type="common">Rice</name>
    <dbReference type="NCBI Taxonomy" id="39947"/>
    <lineage>
        <taxon>Eukaryota</taxon>
        <taxon>Viridiplantae</taxon>
        <taxon>Streptophyta</taxon>
        <taxon>Embryophyta</taxon>
        <taxon>Tracheophyta</taxon>
        <taxon>Spermatophyta</taxon>
        <taxon>Magnoliopsida</taxon>
        <taxon>Liliopsida</taxon>
        <taxon>Poales</taxon>
        <taxon>Poaceae</taxon>
        <taxon>BOP clade</taxon>
        <taxon>Oryzoideae</taxon>
        <taxon>Oryzeae</taxon>
        <taxon>Oryzinae</taxon>
        <taxon>Oryza</taxon>
        <taxon>Oryza sativa</taxon>
    </lineage>
</organism>
<accession>Q9FP29</accession>
<accession>A0A0P0V1U2</accession>
<accession>Q9SXM8</accession>
<accession>Q9XIV6</accession>
<dbReference type="EMBL" id="AB028883">
    <property type="protein sequence ID" value="BAA79224.1"/>
    <property type="molecule type" value="mRNA"/>
</dbReference>
<dbReference type="EMBL" id="AP002881">
    <property type="protein sequence ID" value="BAB19772.1"/>
    <property type="molecule type" value="Genomic_DNA"/>
</dbReference>
<dbReference type="EMBL" id="AP003206">
    <property type="protein sequence ID" value="BAB93157.1"/>
    <property type="molecule type" value="Genomic_DNA"/>
</dbReference>
<dbReference type="EMBL" id="AP008207">
    <property type="protein sequence ID" value="BAF04741.1"/>
    <property type="molecule type" value="Genomic_DNA"/>
</dbReference>
<dbReference type="EMBL" id="AP014957">
    <property type="protein sequence ID" value="BAS71730.1"/>
    <property type="molecule type" value="Genomic_DNA"/>
</dbReference>
<dbReference type="EMBL" id="AB007626">
    <property type="protein sequence ID" value="BAA77820.1"/>
    <property type="molecule type" value="mRNA"/>
</dbReference>
<dbReference type="RefSeq" id="XP_015634297.1">
    <property type="nucleotide sequence ID" value="XM_015778811.1"/>
</dbReference>
<dbReference type="SMR" id="Q9FP29"/>
<dbReference type="FunCoup" id="Q9FP29">
    <property type="interactions" value="331"/>
</dbReference>
<dbReference type="STRING" id="39947.Q9FP29"/>
<dbReference type="PaxDb" id="39947-Q9FP29"/>
<dbReference type="EnsemblPlants" id="Os01t0302500-01">
    <property type="protein sequence ID" value="Os01t0302500-01"/>
    <property type="gene ID" value="Os01g0302500"/>
</dbReference>
<dbReference type="Gramene" id="Os01t0302500-01">
    <property type="protein sequence ID" value="Os01t0302500-01"/>
    <property type="gene ID" value="Os01g0302500"/>
</dbReference>
<dbReference type="KEGG" id="dosa:Os01g0302500"/>
<dbReference type="eggNOG" id="KOG0773">
    <property type="taxonomic scope" value="Eukaryota"/>
</dbReference>
<dbReference type="HOGENOM" id="CLU_040111_0_2_1"/>
<dbReference type="InParanoid" id="Q9FP29"/>
<dbReference type="OMA" id="HSDDMMG"/>
<dbReference type="OrthoDB" id="10056939at2759"/>
<dbReference type="Proteomes" id="UP000000763">
    <property type="component" value="Chromosome 1"/>
</dbReference>
<dbReference type="Proteomes" id="UP000059680">
    <property type="component" value="Chromosome 1"/>
</dbReference>
<dbReference type="GO" id="GO:0005634">
    <property type="term" value="C:nucleus"/>
    <property type="evidence" value="ECO:0000318"/>
    <property type="project" value="GO_Central"/>
</dbReference>
<dbReference type="GO" id="GO:0003677">
    <property type="term" value="F:DNA binding"/>
    <property type="evidence" value="ECO:0007669"/>
    <property type="project" value="UniProtKB-KW"/>
</dbReference>
<dbReference type="GO" id="GO:0000981">
    <property type="term" value="F:DNA-binding transcription factor activity, RNA polymerase II-specific"/>
    <property type="evidence" value="ECO:0007669"/>
    <property type="project" value="InterPro"/>
</dbReference>
<dbReference type="CDD" id="cd00086">
    <property type="entry name" value="homeodomain"/>
    <property type="match status" value="1"/>
</dbReference>
<dbReference type="Gene3D" id="1.10.10.60">
    <property type="entry name" value="Homeodomain-like"/>
    <property type="match status" value="1"/>
</dbReference>
<dbReference type="InterPro" id="IPR005539">
    <property type="entry name" value="ELK_dom"/>
</dbReference>
<dbReference type="InterPro" id="IPR001356">
    <property type="entry name" value="HD"/>
</dbReference>
<dbReference type="InterPro" id="IPR017970">
    <property type="entry name" value="Homeobox_CS"/>
</dbReference>
<dbReference type="InterPro" id="IPR009057">
    <property type="entry name" value="Homeodomain-like_sf"/>
</dbReference>
<dbReference type="InterPro" id="IPR008422">
    <property type="entry name" value="KN_HD"/>
</dbReference>
<dbReference type="InterPro" id="IPR005540">
    <property type="entry name" value="KNOX1"/>
</dbReference>
<dbReference type="InterPro" id="IPR005541">
    <property type="entry name" value="KNOX2"/>
</dbReference>
<dbReference type="InterPro" id="IPR050224">
    <property type="entry name" value="TALE_homeobox"/>
</dbReference>
<dbReference type="PANTHER" id="PTHR11850">
    <property type="entry name" value="HOMEOBOX PROTEIN TRANSCRIPTION FACTORS"/>
    <property type="match status" value="1"/>
</dbReference>
<dbReference type="Pfam" id="PF03789">
    <property type="entry name" value="ELK"/>
    <property type="match status" value="1"/>
</dbReference>
<dbReference type="Pfam" id="PF05920">
    <property type="entry name" value="Homeobox_KN"/>
    <property type="match status" value="1"/>
</dbReference>
<dbReference type="Pfam" id="PF03790">
    <property type="entry name" value="KNOX1"/>
    <property type="match status" value="1"/>
</dbReference>
<dbReference type="Pfam" id="PF03791">
    <property type="entry name" value="KNOX2"/>
    <property type="match status" value="1"/>
</dbReference>
<dbReference type="SMART" id="SM01188">
    <property type="entry name" value="ELK"/>
    <property type="match status" value="1"/>
</dbReference>
<dbReference type="SMART" id="SM00389">
    <property type="entry name" value="HOX"/>
    <property type="match status" value="1"/>
</dbReference>
<dbReference type="SMART" id="SM01255">
    <property type="entry name" value="KNOX1"/>
    <property type="match status" value="1"/>
</dbReference>
<dbReference type="SMART" id="SM01256">
    <property type="entry name" value="KNOX2"/>
    <property type="match status" value="1"/>
</dbReference>
<dbReference type="SUPFAM" id="SSF46689">
    <property type="entry name" value="Homeodomain-like"/>
    <property type="match status" value="1"/>
</dbReference>
<dbReference type="PROSITE" id="PS51213">
    <property type="entry name" value="ELK"/>
    <property type="match status" value="1"/>
</dbReference>
<dbReference type="PROSITE" id="PS00027">
    <property type="entry name" value="HOMEOBOX_1"/>
    <property type="match status" value="1"/>
</dbReference>
<dbReference type="PROSITE" id="PS50071">
    <property type="entry name" value="HOMEOBOX_2"/>
    <property type="match status" value="1"/>
</dbReference>
<gene>
    <name type="primary">OSH6</name>
    <name type="synonym">HOS16</name>
    <name type="ordered locus">Os01g0302500</name>
    <name type="ordered locus">LOC_Os01g19694</name>
    <name type="ORF">B1146F03.18</name>
    <name type="ORF">P0035H10.13</name>
</gene>
<protein>
    <recommendedName>
        <fullName>Homeobox protein knotted-1-like 1</fullName>
    </recommendedName>
    <alternativeName>
        <fullName>Homeobox protein HOS16</fullName>
    </alternativeName>
    <alternativeName>
        <fullName>Homeobox protein OSH6</fullName>
    </alternativeName>
</protein>
<keyword id="KW-0238">DNA-binding</keyword>
<keyword id="KW-0371">Homeobox</keyword>
<keyword id="KW-0539">Nucleus</keyword>
<keyword id="KW-1185">Reference proteome</keyword>
<name>KNOS1_ORYSJ</name>
<evidence type="ECO:0000255" key="1">
    <source>
        <dbReference type="PROSITE-ProRule" id="PRU00108"/>
    </source>
</evidence>
<evidence type="ECO:0000255" key="2">
    <source>
        <dbReference type="PROSITE-ProRule" id="PRU00559"/>
    </source>
</evidence>
<evidence type="ECO:0000256" key="3">
    <source>
        <dbReference type="SAM" id="MobiDB-lite"/>
    </source>
</evidence>
<evidence type="ECO:0000269" key="4">
    <source>
    </source>
</evidence>
<evidence type="ECO:0000305" key="5"/>
<feature type="chain" id="PRO_0000360004" description="Homeobox protein knotted-1-like 1">
    <location>
        <begin position="1"/>
        <end position="301"/>
    </location>
</feature>
<feature type="domain" description="ELK" evidence="2">
    <location>
        <begin position="188"/>
        <end position="208"/>
    </location>
</feature>
<feature type="DNA-binding region" description="Homeobox; TALE-type" evidence="1">
    <location>
        <begin position="209"/>
        <end position="272"/>
    </location>
</feature>
<feature type="region of interest" description="Disordered" evidence="3">
    <location>
        <begin position="141"/>
        <end position="170"/>
    </location>
</feature>
<feature type="compositionally biased region" description="Low complexity" evidence="3">
    <location>
        <begin position="144"/>
        <end position="153"/>
    </location>
</feature>
<feature type="sequence conflict" description="In Ref. 1; BAA79224." evidence="5" ref="1">
    <original>L</original>
    <variation>F</variation>
    <location>
        <position position="279"/>
    </location>
</feature>
<sequence length="301" mass="32736">MEDLYSIHPGISRVGGAASEASGVGVVVGGGGGSSSSDLTELMKAQIAGHPRYPTLLSAYIECRKVGAPPEVASLLKEIGRERRAGGGGGGAGQIGVDPELDEFMEAYCRVLVRYKEELSRPFDEAASFLSSIQTQLSNLCSGATSPPATTATHSDEMVGSSDEDQCSGETDMLDIGQEQSSRLADHELKEMLLKKYSGCLSRLRSEFLKKRKKGKLPKDARSALLEWWNTHYRWPYPTEEDKLRLAARTGLDPKQINNWFINQRKRHWKPSDGMRFALMEGVAGGSSGTTLYFDTGTIGP</sequence>
<comment type="function">
    <text evidence="4">Probable transcription factor that may be involved in shoot formation during early embryogenesis.</text>
</comment>
<comment type="subcellular location">
    <subcellularLocation>
        <location evidence="1 2">Nucleus</location>
    </subcellularLocation>
</comment>
<comment type="developmental stage">
    <text evidence="4">Highly expressed in the early globular stage embryo before 2 days after pollination (DAP), but not in the endosperm. At 3 and 4 DAP, expression is restricted to the region around or just below the center of the ventral side of the embryo, where the shoot apex subsequently arises. During the transition to the shoot apex differentiation stage, expression is divided between the upper and basal regions of the shoot area, and the notch between the first leaf primordium and epiblast, respectively. When the first leaf primordia is evident, expression is localized to the notches between the shoot apical meristem (SAM) and the first leaf primordium and the putative second leaf primordium. Expressed uniformly in the inflorescence meristem, but after the transition from inflorescence to the floral phase, located specifically in the notches between the floral meristem and glume primordia. At later stages of flower development, uniformly expressed throughout the corpus of the meristem, and in the notches between glume primordia, but less well defined than in the previous stage.</text>
</comment>
<comment type="similarity">
    <text evidence="2">Belongs to the TALE/KNOX homeobox family.</text>
</comment>
<proteinExistence type="evidence at transcript level"/>